<keyword id="KW-0002">3D-structure</keyword>
<keyword id="KW-0456">Lyase</keyword>
<keyword id="KW-0663">Pyridoxal phosphate</keyword>
<keyword id="KW-1185">Reference proteome</keyword>
<keyword id="KW-0704">Schiff base</keyword>
<accession>Q5SKD9</accession>
<evidence type="ECO:0000255" key="1">
    <source>
        <dbReference type="HAMAP-Rule" id="MF_01824"/>
    </source>
</evidence>
<evidence type="ECO:0000305" key="2"/>
<evidence type="ECO:0007829" key="3">
    <source>
        <dbReference type="PDB" id="2ZBT"/>
    </source>
</evidence>
<feature type="chain" id="PRO_0000109425" description="Pyridoxal 5'-phosphate synthase subunit PdxS">
    <location>
        <begin position="1"/>
        <end position="293"/>
    </location>
</feature>
<feature type="active site" description="Schiff-base intermediate with D-ribose 5-phosphate" evidence="1">
    <location>
        <position position="80"/>
    </location>
</feature>
<feature type="binding site" evidence="1">
    <location>
        <position position="23"/>
    </location>
    <ligand>
        <name>D-ribose 5-phosphate</name>
        <dbReference type="ChEBI" id="CHEBI:78346"/>
    </ligand>
</feature>
<feature type="binding site" evidence="1">
    <location>
        <position position="152"/>
    </location>
    <ligand>
        <name>D-ribose 5-phosphate</name>
        <dbReference type="ChEBI" id="CHEBI:78346"/>
    </ligand>
</feature>
<feature type="binding site" evidence="1">
    <location>
        <position position="164"/>
    </location>
    <ligand>
        <name>D-glyceraldehyde 3-phosphate</name>
        <dbReference type="ChEBI" id="CHEBI:59776"/>
    </ligand>
</feature>
<feature type="binding site" evidence="1">
    <location>
        <position position="213"/>
    </location>
    <ligand>
        <name>D-ribose 5-phosphate</name>
        <dbReference type="ChEBI" id="CHEBI:78346"/>
    </ligand>
</feature>
<feature type="binding site" evidence="1">
    <location>
        <begin position="234"/>
        <end position="235"/>
    </location>
    <ligand>
        <name>D-ribose 5-phosphate</name>
        <dbReference type="ChEBI" id="CHEBI:78346"/>
    </ligand>
</feature>
<feature type="strand" evidence="3">
    <location>
        <begin position="1"/>
        <end position="8"/>
    </location>
</feature>
<feature type="strand" evidence="3">
    <location>
        <begin position="11"/>
        <end position="13"/>
    </location>
</feature>
<feature type="helix" evidence="3">
    <location>
        <begin position="14"/>
        <end position="16"/>
    </location>
</feature>
<feature type="strand" evidence="3">
    <location>
        <begin position="19"/>
        <end position="26"/>
    </location>
</feature>
<feature type="helix" evidence="3">
    <location>
        <begin position="27"/>
        <end position="36"/>
    </location>
</feature>
<feature type="strand" evidence="3">
    <location>
        <begin position="39"/>
        <end position="43"/>
    </location>
</feature>
<feature type="helix" evidence="3">
    <location>
        <begin position="48"/>
        <end position="53"/>
    </location>
</feature>
<feature type="helix" evidence="3">
    <location>
        <begin position="63"/>
        <end position="70"/>
    </location>
</feature>
<feature type="strand" evidence="3">
    <location>
        <begin position="77"/>
        <end position="82"/>
    </location>
</feature>
<feature type="helix" evidence="3">
    <location>
        <begin position="86"/>
        <end position="94"/>
    </location>
</feature>
<feature type="strand" evidence="3">
    <location>
        <begin position="98"/>
        <end position="103"/>
    </location>
</feature>
<feature type="helix" evidence="3">
    <location>
        <begin position="117"/>
        <end position="119"/>
    </location>
</feature>
<feature type="strand" evidence="3">
    <location>
        <begin position="124"/>
        <end position="130"/>
    </location>
</feature>
<feature type="helix" evidence="3">
    <location>
        <begin position="131"/>
        <end position="139"/>
    </location>
</feature>
<feature type="strand" evidence="3">
    <location>
        <begin position="143"/>
        <end position="147"/>
    </location>
</feature>
<feature type="strand" evidence="3">
    <location>
        <begin position="151"/>
        <end position="153"/>
    </location>
</feature>
<feature type="helix" evidence="3">
    <location>
        <begin position="157"/>
        <end position="175"/>
    </location>
</feature>
<feature type="helix" evidence="3">
    <location>
        <begin position="178"/>
        <end position="180"/>
    </location>
</feature>
<feature type="helix" evidence="3">
    <location>
        <begin position="181"/>
        <end position="188"/>
    </location>
</feature>
<feature type="helix" evidence="3">
    <location>
        <begin position="192"/>
        <end position="201"/>
    </location>
</feature>
<feature type="strand" evidence="3">
    <location>
        <begin position="208"/>
        <end position="210"/>
    </location>
</feature>
<feature type="helix" evidence="3">
    <location>
        <begin position="217"/>
        <end position="225"/>
    </location>
</feature>
<feature type="strand" evidence="3">
    <location>
        <begin position="229"/>
        <end position="233"/>
    </location>
</feature>
<feature type="helix" evidence="3">
    <location>
        <begin position="235"/>
        <end position="239"/>
    </location>
</feature>
<feature type="helix" evidence="3">
    <location>
        <begin position="243"/>
        <end position="255"/>
    </location>
</feature>
<feature type="turn" evidence="3">
    <location>
        <begin position="256"/>
        <end position="258"/>
    </location>
</feature>
<feature type="helix" evidence="3">
    <location>
        <begin position="260"/>
        <end position="267"/>
    </location>
</feature>
<sequence>MEKGTFQIKTGFAEMFKGGVIMDVTTPEQAVIAEEAGAVAVMALERVPADIRAQGGVARMSDPKIIKEIMAAVSIPVMAKVRIGHFVEAMILEAIGVDFIDESEVLTPADEEHHIDKWKFKVPFVCGARNLGEALRRIAEGAAMIRTKGEAGTGNVVEAVRHARTMWKEIRYVQSLREDELMAYAKEIGAPFELVKWVHDHGRLPVVNFAAGGIATPADAALMMHLGMDGVFVGSGIFKSGDPRKRARAIVRAVAHYNDPEVLAEVSEDLGEPMVGINLDQLKEEERLAKRGW</sequence>
<protein>
    <recommendedName>
        <fullName evidence="1">Pyridoxal 5'-phosphate synthase subunit PdxS</fullName>
        <shortName evidence="1">PLP synthase subunit PdxS</shortName>
        <ecNumber evidence="1">4.3.3.6</ecNumber>
    </recommendedName>
    <alternativeName>
        <fullName evidence="1">Pdx1</fullName>
    </alternativeName>
</protein>
<reference key="1">
    <citation type="submission" date="2004-11" db="EMBL/GenBank/DDBJ databases">
        <title>Complete genome sequence of Thermus thermophilus HB8.</title>
        <authorList>
            <person name="Masui R."/>
            <person name="Kurokawa K."/>
            <person name="Nakagawa N."/>
            <person name="Tokunaga F."/>
            <person name="Koyama Y."/>
            <person name="Shibata T."/>
            <person name="Oshima T."/>
            <person name="Yokoyama S."/>
            <person name="Yasunaga T."/>
            <person name="Kuramitsu S."/>
        </authorList>
    </citation>
    <scope>NUCLEOTIDE SEQUENCE [LARGE SCALE GENOMIC DNA]</scope>
    <source>
        <strain>ATCC 27634 / DSM 579 / HB8</strain>
    </source>
</reference>
<reference key="2">
    <citation type="submission" date="2007-10" db="PDB data bank">
        <title>Crystal structure of pyridoxine biosynthesis protein from Thermus thermophilus HB8.</title>
        <authorList>
            <person name="Manzoku M."/>
            <person name="Ebihara A."/>
            <person name="Fujimoto Y."/>
            <person name="Yokoyama S."/>
            <person name="Kuramitsu S."/>
        </authorList>
    </citation>
    <scope>X-RAY CRYSTALLOGRAPHY (1.65 ANGSTROMS)</scope>
</reference>
<name>PDXS_THET8</name>
<comment type="function">
    <text evidence="1">Catalyzes the formation of pyridoxal 5'-phosphate from ribose 5-phosphate (RBP), glyceraldehyde 3-phosphate (G3P) and ammonia. The ammonia is provided by the PdxT subunit. Can also use ribulose 5-phosphate and dihydroxyacetone phosphate as substrates, resulting from enzyme-catalyzed isomerization of RBP and G3P, respectively.</text>
</comment>
<comment type="catalytic activity">
    <reaction evidence="1">
        <text>aldehydo-D-ribose 5-phosphate + D-glyceraldehyde 3-phosphate + L-glutamine = pyridoxal 5'-phosphate + L-glutamate + phosphate + 3 H2O + H(+)</text>
        <dbReference type="Rhea" id="RHEA:31507"/>
        <dbReference type="ChEBI" id="CHEBI:15377"/>
        <dbReference type="ChEBI" id="CHEBI:15378"/>
        <dbReference type="ChEBI" id="CHEBI:29985"/>
        <dbReference type="ChEBI" id="CHEBI:43474"/>
        <dbReference type="ChEBI" id="CHEBI:58273"/>
        <dbReference type="ChEBI" id="CHEBI:58359"/>
        <dbReference type="ChEBI" id="CHEBI:59776"/>
        <dbReference type="ChEBI" id="CHEBI:597326"/>
        <dbReference type="EC" id="4.3.3.6"/>
    </reaction>
</comment>
<comment type="pathway">
    <text evidence="1">Cofactor biosynthesis; pyridoxal 5'-phosphate biosynthesis.</text>
</comment>
<comment type="subunit">
    <text evidence="1">In the presence of PdxT, forms a dodecamer of heterodimers.</text>
</comment>
<comment type="similarity">
    <text evidence="1">Belongs to the PdxS/SNZ family.</text>
</comment>
<comment type="sequence caution" evidence="2">
    <conflict type="erroneous initiation">
        <sequence resource="EMBL-CDS" id="BAD70527"/>
    </conflict>
    <text>Extended N-terminus.</text>
</comment>
<organism>
    <name type="scientific">Thermus thermophilus (strain ATCC 27634 / DSM 579 / HB8)</name>
    <dbReference type="NCBI Taxonomy" id="300852"/>
    <lineage>
        <taxon>Bacteria</taxon>
        <taxon>Thermotogati</taxon>
        <taxon>Deinococcota</taxon>
        <taxon>Deinococci</taxon>
        <taxon>Thermales</taxon>
        <taxon>Thermaceae</taxon>
        <taxon>Thermus</taxon>
    </lineage>
</organism>
<dbReference type="EC" id="4.3.3.6" evidence="1"/>
<dbReference type="EMBL" id="AP008226">
    <property type="protein sequence ID" value="BAD70527.1"/>
    <property type="status" value="ALT_INIT"/>
    <property type="molecule type" value="Genomic_DNA"/>
</dbReference>
<dbReference type="RefSeq" id="WP_024119184.1">
    <property type="nucleotide sequence ID" value="NC_006461.1"/>
</dbReference>
<dbReference type="RefSeq" id="YP_143970.1">
    <property type="nucleotide sequence ID" value="NC_006461.1"/>
</dbReference>
<dbReference type="PDB" id="2ZBT">
    <property type="method" value="X-ray"/>
    <property type="resolution" value="1.65 A"/>
    <property type="chains" value="A/B/C/D=1-293"/>
</dbReference>
<dbReference type="PDBsum" id="2ZBT"/>
<dbReference type="SMR" id="Q5SKD9"/>
<dbReference type="EnsemblBacteria" id="BAD70527">
    <property type="protein sequence ID" value="BAD70527"/>
    <property type="gene ID" value="BAD70527"/>
</dbReference>
<dbReference type="GeneID" id="3169908"/>
<dbReference type="KEGG" id="ttj:TTHA0704"/>
<dbReference type="PATRIC" id="fig|300852.9.peg.698"/>
<dbReference type="eggNOG" id="COG0214">
    <property type="taxonomic scope" value="Bacteria"/>
</dbReference>
<dbReference type="HOGENOM" id="CLU_055352_1_0_0"/>
<dbReference type="UniPathway" id="UPA00245"/>
<dbReference type="EvolutionaryTrace" id="Q5SKD9"/>
<dbReference type="Proteomes" id="UP000000532">
    <property type="component" value="Chromosome"/>
</dbReference>
<dbReference type="GO" id="GO:0036381">
    <property type="term" value="F:pyridoxal 5'-phosphate synthase (glutamine hydrolysing) activity"/>
    <property type="evidence" value="ECO:0007669"/>
    <property type="project" value="UniProtKB-UniRule"/>
</dbReference>
<dbReference type="GO" id="GO:0006520">
    <property type="term" value="P:amino acid metabolic process"/>
    <property type="evidence" value="ECO:0007669"/>
    <property type="project" value="TreeGrafter"/>
</dbReference>
<dbReference type="GO" id="GO:0042823">
    <property type="term" value="P:pyridoxal phosphate biosynthetic process"/>
    <property type="evidence" value="ECO:0007669"/>
    <property type="project" value="UniProtKB-UniRule"/>
</dbReference>
<dbReference type="GO" id="GO:0008615">
    <property type="term" value="P:pyridoxine biosynthetic process"/>
    <property type="evidence" value="ECO:0007669"/>
    <property type="project" value="TreeGrafter"/>
</dbReference>
<dbReference type="CDD" id="cd04727">
    <property type="entry name" value="pdxS"/>
    <property type="match status" value="1"/>
</dbReference>
<dbReference type="FunFam" id="3.20.20.70:FF:000001">
    <property type="entry name" value="Pyridoxine biosynthesis protein PDX1"/>
    <property type="match status" value="1"/>
</dbReference>
<dbReference type="Gene3D" id="3.20.20.70">
    <property type="entry name" value="Aldolase class I"/>
    <property type="match status" value="1"/>
</dbReference>
<dbReference type="HAMAP" id="MF_01824">
    <property type="entry name" value="PdxS"/>
    <property type="match status" value="1"/>
</dbReference>
<dbReference type="InterPro" id="IPR013785">
    <property type="entry name" value="Aldolase_TIM"/>
</dbReference>
<dbReference type="InterPro" id="IPR001852">
    <property type="entry name" value="PdxS/SNZ"/>
</dbReference>
<dbReference type="InterPro" id="IPR033755">
    <property type="entry name" value="PdxS/SNZ_N"/>
</dbReference>
<dbReference type="InterPro" id="IPR011060">
    <property type="entry name" value="RibuloseP-bd_barrel"/>
</dbReference>
<dbReference type="NCBIfam" id="NF003215">
    <property type="entry name" value="PRK04180.1"/>
    <property type="match status" value="1"/>
</dbReference>
<dbReference type="NCBIfam" id="TIGR00343">
    <property type="entry name" value="pyridoxal 5'-phosphate synthase lyase subunit PdxS"/>
    <property type="match status" value="1"/>
</dbReference>
<dbReference type="PANTHER" id="PTHR31829">
    <property type="entry name" value="PYRIDOXAL 5'-PHOSPHATE SYNTHASE SUBUNIT SNZ1-RELATED"/>
    <property type="match status" value="1"/>
</dbReference>
<dbReference type="PANTHER" id="PTHR31829:SF0">
    <property type="entry name" value="PYRIDOXAL 5'-PHOSPHATE SYNTHASE SUBUNIT SNZ1-RELATED"/>
    <property type="match status" value="1"/>
</dbReference>
<dbReference type="Pfam" id="PF01680">
    <property type="entry name" value="SOR_SNZ"/>
    <property type="match status" value="1"/>
</dbReference>
<dbReference type="PIRSF" id="PIRSF029271">
    <property type="entry name" value="Pdx1"/>
    <property type="match status" value="1"/>
</dbReference>
<dbReference type="SUPFAM" id="SSF51366">
    <property type="entry name" value="Ribulose-phoshate binding barrel"/>
    <property type="match status" value="1"/>
</dbReference>
<dbReference type="PROSITE" id="PS01235">
    <property type="entry name" value="PDXS_SNZ_1"/>
    <property type="match status" value="1"/>
</dbReference>
<dbReference type="PROSITE" id="PS51129">
    <property type="entry name" value="PDXS_SNZ_2"/>
    <property type="match status" value="1"/>
</dbReference>
<gene>
    <name evidence="1" type="primary">pdxS</name>
    <name type="ordered locus">TTHA0704</name>
</gene>
<proteinExistence type="evidence at protein level"/>